<sequence length="205" mass="22336">MSHKKQDAFQGLIDALKVLPNVGPKSAQRIAYHLLQHKRKEAEKLVDALQTALKQVDHCARCNTFCEGGLCDICADETRDGRRLMVVHMPADVSNMEAANCHDGLYFVLMGQINTALGMDVSAIALDRLAQRLGGGEVEEIIIATAFTAEGNATAYVLSEFFKNLPYKVSRLSQGIPLGGELEYVDAGTLAQAVYERRLIKEGGA</sequence>
<dbReference type="EMBL" id="AL157959">
    <property type="protein sequence ID" value="CAM08572.1"/>
    <property type="molecule type" value="Genomic_DNA"/>
</dbReference>
<dbReference type="PIR" id="G81909">
    <property type="entry name" value="G81909"/>
</dbReference>
<dbReference type="RefSeq" id="WP_002237005.1">
    <property type="nucleotide sequence ID" value="NC_003116.1"/>
</dbReference>
<dbReference type="SMR" id="Q9JUB6"/>
<dbReference type="EnsemblBacteria" id="CAM08572">
    <property type="protein sequence ID" value="CAM08572"/>
    <property type="gene ID" value="NMA1406"/>
</dbReference>
<dbReference type="GeneID" id="86929559"/>
<dbReference type="KEGG" id="nma:NMA1406"/>
<dbReference type="HOGENOM" id="CLU_060739_1_2_4"/>
<dbReference type="Proteomes" id="UP000000626">
    <property type="component" value="Chromosome"/>
</dbReference>
<dbReference type="GO" id="GO:0003677">
    <property type="term" value="F:DNA binding"/>
    <property type="evidence" value="ECO:0007669"/>
    <property type="project" value="UniProtKB-UniRule"/>
</dbReference>
<dbReference type="GO" id="GO:0008270">
    <property type="term" value="F:zinc ion binding"/>
    <property type="evidence" value="ECO:0007669"/>
    <property type="project" value="UniProtKB-KW"/>
</dbReference>
<dbReference type="GO" id="GO:0006310">
    <property type="term" value="P:DNA recombination"/>
    <property type="evidence" value="ECO:0007669"/>
    <property type="project" value="UniProtKB-UniRule"/>
</dbReference>
<dbReference type="GO" id="GO:0006281">
    <property type="term" value="P:DNA repair"/>
    <property type="evidence" value="ECO:0007669"/>
    <property type="project" value="UniProtKB-UniRule"/>
</dbReference>
<dbReference type="CDD" id="cd01025">
    <property type="entry name" value="TOPRIM_recR"/>
    <property type="match status" value="1"/>
</dbReference>
<dbReference type="Gene3D" id="3.40.1360.10">
    <property type="match status" value="1"/>
</dbReference>
<dbReference type="Gene3D" id="1.10.8.420">
    <property type="entry name" value="RecR Domain 1"/>
    <property type="match status" value="1"/>
</dbReference>
<dbReference type="HAMAP" id="MF_00017">
    <property type="entry name" value="RecR"/>
    <property type="match status" value="1"/>
</dbReference>
<dbReference type="InterPro" id="IPR000093">
    <property type="entry name" value="DNA_Rcmb_RecR"/>
</dbReference>
<dbReference type="InterPro" id="IPR023627">
    <property type="entry name" value="Rcmb_RecR"/>
</dbReference>
<dbReference type="InterPro" id="IPR015967">
    <property type="entry name" value="Rcmb_RecR_Znf"/>
</dbReference>
<dbReference type="InterPro" id="IPR006171">
    <property type="entry name" value="TOPRIM_dom"/>
</dbReference>
<dbReference type="InterPro" id="IPR034137">
    <property type="entry name" value="TOPRIM_RecR"/>
</dbReference>
<dbReference type="NCBIfam" id="TIGR00615">
    <property type="entry name" value="recR"/>
    <property type="match status" value="1"/>
</dbReference>
<dbReference type="PANTHER" id="PTHR30446">
    <property type="entry name" value="RECOMBINATION PROTEIN RECR"/>
    <property type="match status" value="1"/>
</dbReference>
<dbReference type="PANTHER" id="PTHR30446:SF0">
    <property type="entry name" value="RECOMBINATION PROTEIN RECR"/>
    <property type="match status" value="1"/>
</dbReference>
<dbReference type="Pfam" id="PF21175">
    <property type="entry name" value="RecR_C"/>
    <property type="match status" value="1"/>
</dbReference>
<dbReference type="Pfam" id="PF21176">
    <property type="entry name" value="RecR_HhH"/>
    <property type="match status" value="1"/>
</dbReference>
<dbReference type="Pfam" id="PF02132">
    <property type="entry name" value="RecR_ZnF"/>
    <property type="match status" value="1"/>
</dbReference>
<dbReference type="Pfam" id="PF13662">
    <property type="entry name" value="Toprim_4"/>
    <property type="match status" value="1"/>
</dbReference>
<dbReference type="SUPFAM" id="SSF111304">
    <property type="entry name" value="Recombination protein RecR"/>
    <property type="match status" value="1"/>
</dbReference>
<dbReference type="PROSITE" id="PS01300">
    <property type="entry name" value="RECR"/>
    <property type="match status" value="1"/>
</dbReference>
<dbReference type="PROSITE" id="PS50880">
    <property type="entry name" value="TOPRIM"/>
    <property type="match status" value="1"/>
</dbReference>
<organism>
    <name type="scientific">Neisseria meningitidis serogroup A / serotype 4A (strain DSM 15465 / Z2491)</name>
    <dbReference type="NCBI Taxonomy" id="122587"/>
    <lineage>
        <taxon>Bacteria</taxon>
        <taxon>Pseudomonadati</taxon>
        <taxon>Pseudomonadota</taxon>
        <taxon>Betaproteobacteria</taxon>
        <taxon>Neisseriales</taxon>
        <taxon>Neisseriaceae</taxon>
        <taxon>Neisseria</taxon>
    </lineage>
</organism>
<accession>Q9JUB6</accession>
<accession>A1IS22</accession>
<name>RECR_NEIMA</name>
<proteinExistence type="inferred from homology"/>
<evidence type="ECO:0000255" key="1">
    <source>
        <dbReference type="HAMAP-Rule" id="MF_00017"/>
    </source>
</evidence>
<protein>
    <recommendedName>
        <fullName evidence="1">Recombination protein RecR</fullName>
    </recommendedName>
</protein>
<comment type="function">
    <text evidence="1">May play a role in DNA repair. It seems to be involved in an RecBC-independent recombinational process of DNA repair. It may act with RecF and RecO.</text>
</comment>
<comment type="similarity">
    <text evidence="1">Belongs to the RecR family.</text>
</comment>
<feature type="chain" id="PRO_0000190354" description="Recombination protein RecR">
    <location>
        <begin position="1"/>
        <end position="205"/>
    </location>
</feature>
<feature type="domain" description="Toprim" evidence="1">
    <location>
        <begin position="82"/>
        <end position="177"/>
    </location>
</feature>
<feature type="zinc finger region" description="C4-type" evidence="1">
    <location>
        <begin position="59"/>
        <end position="74"/>
    </location>
</feature>
<keyword id="KW-0227">DNA damage</keyword>
<keyword id="KW-0233">DNA recombination</keyword>
<keyword id="KW-0234">DNA repair</keyword>
<keyword id="KW-0479">Metal-binding</keyword>
<keyword id="KW-0862">Zinc</keyword>
<keyword id="KW-0863">Zinc-finger</keyword>
<gene>
    <name evidence="1" type="primary">recR</name>
    <name type="ordered locus">NMA1406</name>
</gene>
<reference key="1">
    <citation type="journal article" date="2000" name="Nature">
        <title>Complete DNA sequence of a serogroup A strain of Neisseria meningitidis Z2491.</title>
        <authorList>
            <person name="Parkhill J."/>
            <person name="Achtman M."/>
            <person name="James K.D."/>
            <person name="Bentley S.D."/>
            <person name="Churcher C.M."/>
            <person name="Klee S.R."/>
            <person name="Morelli G."/>
            <person name="Basham D."/>
            <person name="Brown D."/>
            <person name="Chillingworth T."/>
            <person name="Davies R.M."/>
            <person name="Davis P."/>
            <person name="Devlin K."/>
            <person name="Feltwell T."/>
            <person name="Hamlin N."/>
            <person name="Holroyd S."/>
            <person name="Jagels K."/>
            <person name="Leather S."/>
            <person name="Moule S."/>
            <person name="Mungall K.L."/>
            <person name="Quail M.A."/>
            <person name="Rajandream M.A."/>
            <person name="Rutherford K.M."/>
            <person name="Simmonds M."/>
            <person name="Skelton J."/>
            <person name="Whitehead S."/>
            <person name="Spratt B.G."/>
            <person name="Barrell B.G."/>
        </authorList>
    </citation>
    <scope>NUCLEOTIDE SEQUENCE [LARGE SCALE GENOMIC DNA]</scope>
    <source>
        <strain>DSM 15465 / Z2491</strain>
    </source>
</reference>